<reference key="1">
    <citation type="journal article" date="2012" name="BMC Microbiol.">
        <title>Genome sequence of Desulfitobacterium hafniense DCB-2, a Gram-positive anaerobe capable of dehalogenation and metal reduction.</title>
        <authorList>
            <person name="Kim S.H."/>
            <person name="Harzman C."/>
            <person name="Davis J.K."/>
            <person name="Hutcheson R."/>
            <person name="Broderick J.B."/>
            <person name="Marsh T.L."/>
            <person name="Tiedje J.M."/>
        </authorList>
    </citation>
    <scope>NUCLEOTIDE SEQUENCE [LARGE SCALE GENOMIC DNA]</scope>
    <source>
        <strain>DSM 10664 / DCB-2</strain>
    </source>
</reference>
<dbReference type="EMBL" id="CP001336">
    <property type="protein sequence ID" value="ACL21855.1"/>
    <property type="molecule type" value="Genomic_DNA"/>
</dbReference>
<dbReference type="RefSeq" id="WP_005813371.1">
    <property type="nucleotide sequence ID" value="NC_011830.1"/>
</dbReference>
<dbReference type="SMR" id="B8FS67"/>
<dbReference type="KEGG" id="dhd:Dhaf_3839"/>
<dbReference type="HOGENOM" id="CLU_064548_7_0_9"/>
<dbReference type="Proteomes" id="UP000007726">
    <property type="component" value="Chromosome"/>
</dbReference>
<dbReference type="GO" id="GO:1990904">
    <property type="term" value="C:ribonucleoprotein complex"/>
    <property type="evidence" value="ECO:0007669"/>
    <property type="project" value="UniProtKB-KW"/>
</dbReference>
<dbReference type="GO" id="GO:0005840">
    <property type="term" value="C:ribosome"/>
    <property type="evidence" value="ECO:0007669"/>
    <property type="project" value="UniProtKB-KW"/>
</dbReference>
<dbReference type="GO" id="GO:0003735">
    <property type="term" value="F:structural constituent of ribosome"/>
    <property type="evidence" value="ECO:0007669"/>
    <property type="project" value="InterPro"/>
</dbReference>
<dbReference type="GO" id="GO:0006412">
    <property type="term" value="P:translation"/>
    <property type="evidence" value="ECO:0007669"/>
    <property type="project" value="UniProtKB-UniRule"/>
</dbReference>
<dbReference type="Gene3D" id="2.30.170.40">
    <property type="entry name" value="Ribosomal protein L28/L24"/>
    <property type="match status" value="1"/>
</dbReference>
<dbReference type="HAMAP" id="MF_00373">
    <property type="entry name" value="Ribosomal_bL28"/>
    <property type="match status" value="1"/>
</dbReference>
<dbReference type="InterPro" id="IPR050096">
    <property type="entry name" value="Bacterial_rp_bL28"/>
</dbReference>
<dbReference type="InterPro" id="IPR026569">
    <property type="entry name" value="Ribosomal_bL28"/>
</dbReference>
<dbReference type="InterPro" id="IPR034704">
    <property type="entry name" value="Ribosomal_bL28/bL31-like_sf"/>
</dbReference>
<dbReference type="InterPro" id="IPR001383">
    <property type="entry name" value="Ribosomal_bL28_bact-type"/>
</dbReference>
<dbReference type="InterPro" id="IPR037147">
    <property type="entry name" value="Ribosomal_bL28_sf"/>
</dbReference>
<dbReference type="NCBIfam" id="TIGR00009">
    <property type="entry name" value="L28"/>
    <property type="match status" value="1"/>
</dbReference>
<dbReference type="PANTHER" id="PTHR39080">
    <property type="entry name" value="50S RIBOSOMAL PROTEIN L28"/>
    <property type="match status" value="1"/>
</dbReference>
<dbReference type="PANTHER" id="PTHR39080:SF1">
    <property type="entry name" value="LARGE RIBOSOMAL SUBUNIT PROTEIN BL28A"/>
    <property type="match status" value="1"/>
</dbReference>
<dbReference type="Pfam" id="PF00830">
    <property type="entry name" value="Ribosomal_L28"/>
    <property type="match status" value="1"/>
</dbReference>
<dbReference type="SUPFAM" id="SSF143800">
    <property type="entry name" value="L28p-like"/>
    <property type="match status" value="1"/>
</dbReference>
<gene>
    <name evidence="1" type="primary">rpmB</name>
    <name type="ordered locus">Dhaf_3839</name>
</gene>
<accession>B8FS67</accession>
<keyword id="KW-0687">Ribonucleoprotein</keyword>
<keyword id="KW-0689">Ribosomal protein</keyword>
<evidence type="ECO:0000255" key="1">
    <source>
        <dbReference type="HAMAP-Rule" id="MF_00373"/>
    </source>
</evidence>
<evidence type="ECO:0000305" key="2"/>
<protein>
    <recommendedName>
        <fullName evidence="1">Large ribosomal subunit protein bL28</fullName>
    </recommendedName>
    <alternativeName>
        <fullName evidence="2">50S ribosomal protein L28</fullName>
    </alternativeName>
</protein>
<feature type="chain" id="PRO_1000195918" description="Large ribosomal subunit protein bL28">
    <location>
        <begin position="1"/>
        <end position="63"/>
    </location>
</feature>
<comment type="similarity">
    <text evidence="1">Belongs to the bacterial ribosomal protein bL28 family.</text>
</comment>
<name>RL28_DESHD</name>
<proteinExistence type="inferred from homology"/>
<organism>
    <name type="scientific">Desulfitobacterium hafniense (strain DSM 10664 / DCB-2)</name>
    <dbReference type="NCBI Taxonomy" id="272564"/>
    <lineage>
        <taxon>Bacteria</taxon>
        <taxon>Bacillati</taxon>
        <taxon>Bacillota</taxon>
        <taxon>Clostridia</taxon>
        <taxon>Eubacteriales</taxon>
        <taxon>Desulfitobacteriaceae</taxon>
        <taxon>Desulfitobacterium</taxon>
    </lineage>
</organism>
<sequence>MANVCAICGKGVASGIQVSHSHIRTKRTWKPNLQRVHAIVNGTPTRISVCTRCLRSGKVQRAV</sequence>